<accession>Q84JL5</accession>
<accession>F4J8I9</accession>
<accession>Q9M9L4</accession>
<sequence length="633" mass="71920">MNAITFLGNSTMIPSQCILRAFTRISPSKYIRDTSFRSYPSRFSSCINQYRNADSDRIIRPTNAVPFCTDRQSSVTAQVVSEARSHSASTTCANDTTLDQIYTKNGLNVKPLVVERLKRDEKDEEAVNEDEEGVKRDGFEGVKCNDVEEEAWRLLRDSIVTYCDSPVGTVAAKDPTDTTPSNYDQVFIRDFVPSALAFLLKGESEIVRNFLLHTLQLQSWEKTVDCYSPGQGLMPASFKVRTLPLEEDKFEEVLDPDFGEAAIGRVAPVDSGLWWIILLRAYGKITGDYSLQERIDVQTGIKMIANLCLADGFDMFPTLLVTDGSCMIDRRMGIHGHPLEIQALFYSALRSSREMITVNDSSKNIIKTISNRLSALSFHIRENYWVDKNKINEIYRYKTEEYSMDATNKFNIYPEQVSPWLMDWVPESPDSGFLIGNLQPAHMDFRFFTLGNLWSIISSLGTPKQNQAILNLVEEKWDDLVGHMPLKICYPALESSEWHIITGSDPKNTPWSYHNGGSWPTLLWQFTLACIKMGRPELAEKAVTLAEKRLQADRWPEYYDTRDGKFIGKQSRLYQTWTIAGFLTSKQLLQNPEIASSLFWEEDLELLESCVCVLTKSGRKKCSRAAAKSQILI</sequence>
<gene>
    <name evidence="6" type="primary">INVH</name>
    <name evidence="8" type="ordered locus">At3g05820</name>
    <name evidence="9" type="ORF">F10A16.11</name>
</gene>
<reference key="1">
    <citation type="journal article" date="2000" name="Nature">
        <title>Sequence and analysis of chromosome 3 of the plant Arabidopsis thaliana.</title>
        <authorList>
            <person name="Salanoubat M."/>
            <person name="Lemcke K."/>
            <person name="Rieger M."/>
            <person name="Ansorge W."/>
            <person name="Unseld M."/>
            <person name="Fartmann B."/>
            <person name="Valle G."/>
            <person name="Bloecker H."/>
            <person name="Perez-Alonso M."/>
            <person name="Obermaier B."/>
            <person name="Delseny M."/>
            <person name="Boutry M."/>
            <person name="Grivell L.A."/>
            <person name="Mache R."/>
            <person name="Puigdomenech P."/>
            <person name="De Simone V."/>
            <person name="Choisne N."/>
            <person name="Artiguenave F."/>
            <person name="Robert C."/>
            <person name="Brottier P."/>
            <person name="Wincker P."/>
            <person name="Cattolico L."/>
            <person name="Weissenbach J."/>
            <person name="Saurin W."/>
            <person name="Quetier F."/>
            <person name="Schaefer M."/>
            <person name="Mueller-Auer S."/>
            <person name="Gabel C."/>
            <person name="Fuchs M."/>
            <person name="Benes V."/>
            <person name="Wurmbach E."/>
            <person name="Drzonek H."/>
            <person name="Erfle H."/>
            <person name="Jordan N."/>
            <person name="Bangert S."/>
            <person name="Wiedelmann R."/>
            <person name="Kranz H."/>
            <person name="Voss H."/>
            <person name="Holland R."/>
            <person name="Brandt P."/>
            <person name="Nyakatura G."/>
            <person name="Vezzi A."/>
            <person name="D'Angelo M."/>
            <person name="Pallavicini A."/>
            <person name="Toppo S."/>
            <person name="Simionati B."/>
            <person name="Conrad A."/>
            <person name="Hornischer K."/>
            <person name="Kauer G."/>
            <person name="Loehnert T.-H."/>
            <person name="Nordsiek G."/>
            <person name="Reichelt J."/>
            <person name="Scharfe M."/>
            <person name="Schoen O."/>
            <person name="Bargues M."/>
            <person name="Terol J."/>
            <person name="Climent J."/>
            <person name="Navarro P."/>
            <person name="Collado C."/>
            <person name="Perez-Perez A."/>
            <person name="Ottenwaelder B."/>
            <person name="Duchemin D."/>
            <person name="Cooke R."/>
            <person name="Laudie M."/>
            <person name="Berger-Llauro C."/>
            <person name="Purnelle B."/>
            <person name="Masuy D."/>
            <person name="de Haan M."/>
            <person name="Maarse A.C."/>
            <person name="Alcaraz J.-P."/>
            <person name="Cottet A."/>
            <person name="Casacuberta E."/>
            <person name="Monfort A."/>
            <person name="Argiriou A."/>
            <person name="Flores M."/>
            <person name="Liguori R."/>
            <person name="Vitale D."/>
            <person name="Mannhaupt G."/>
            <person name="Haase D."/>
            <person name="Schoof H."/>
            <person name="Rudd S."/>
            <person name="Zaccaria P."/>
            <person name="Mewes H.-W."/>
            <person name="Mayer K.F.X."/>
            <person name="Kaul S."/>
            <person name="Town C.D."/>
            <person name="Koo H.L."/>
            <person name="Tallon L.J."/>
            <person name="Jenkins J."/>
            <person name="Rooney T."/>
            <person name="Rizzo M."/>
            <person name="Walts A."/>
            <person name="Utterback T."/>
            <person name="Fujii C.Y."/>
            <person name="Shea T.P."/>
            <person name="Creasy T.H."/>
            <person name="Haas B."/>
            <person name="Maiti R."/>
            <person name="Wu D."/>
            <person name="Peterson J."/>
            <person name="Van Aken S."/>
            <person name="Pai G."/>
            <person name="Militscher J."/>
            <person name="Sellers P."/>
            <person name="Gill J.E."/>
            <person name="Feldblyum T.V."/>
            <person name="Preuss D."/>
            <person name="Lin X."/>
            <person name="Nierman W.C."/>
            <person name="Salzberg S.L."/>
            <person name="White O."/>
            <person name="Venter J.C."/>
            <person name="Fraser C.M."/>
            <person name="Kaneko T."/>
            <person name="Nakamura Y."/>
            <person name="Sato S."/>
            <person name="Kato T."/>
            <person name="Asamizu E."/>
            <person name="Sasamoto S."/>
            <person name="Kimura T."/>
            <person name="Idesawa K."/>
            <person name="Kawashima K."/>
            <person name="Kishida Y."/>
            <person name="Kiyokawa C."/>
            <person name="Kohara M."/>
            <person name="Matsumoto M."/>
            <person name="Matsuno A."/>
            <person name="Muraki A."/>
            <person name="Nakayama S."/>
            <person name="Nakazaki N."/>
            <person name="Shinpo S."/>
            <person name="Takeuchi C."/>
            <person name="Wada T."/>
            <person name="Watanabe A."/>
            <person name="Yamada M."/>
            <person name="Yasuda M."/>
            <person name="Tabata S."/>
        </authorList>
    </citation>
    <scope>NUCLEOTIDE SEQUENCE [LARGE SCALE GENOMIC DNA]</scope>
    <source>
        <strain>cv. Columbia</strain>
    </source>
</reference>
<reference key="2">
    <citation type="journal article" date="2017" name="Plant J.">
        <title>Araport11: a complete reannotation of the Arabidopsis thaliana reference genome.</title>
        <authorList>
            <person name="Cheng C.Y."/>
            <person name="Krishnakumar V."/>
            <person name="Chan A.P."/>
            <person name="Thibaud-Nissen F."/>
            <person name="Schobel S."/>
            <person name="Town C.D."/>
        </authorList>
    </citation>
    <scope>GENOME REANNOTATION</scope>
    <source>
        <strain>cv. Columbia</strain>
    </source>
</reference>
<reference key="3">
    <citation type="journal article" date="2003" name="Science">
        <title>Empirical analysis of transcriptional activity in the Arabidopsis genome.</title>
        <authorList>
            <person name="Yamada K."/>
            <person name="Lim J."/>
            <person name="Dale J.M."/>
            <person name="Chen H."/>
            <person name="Shinn P."/>
            <person name="Palm C.J."/>
            <person name="Southwick A.M."/>
            <person name="Wu H.C."/>
            <person name="Kim C.J."/>
            <person name="Nguyen M."/>
            <person name="Pham P.K."/>
            <person name="Cheuk R.F."/>
            <person name="Karlin-Newmann G."/>
            <person name="Liu S.X."/>
            <person name="Lam B."/>
            <person name="Sakano H."/>
            <person name="Wu T."/>
            <person name="Yu G."/>
            <person name="Miranda M."/>
            <person name="Quach H.L."/>
            <person name="Tripp M."/>
            <person name="Chang C.H."/>
            <person name="Lee J.M."/>
            <person name="Toriumi M.J."/>
            <person name="Chan M.M."/>
            <person name="Tang C.C."/>
            <person name="Onodera C.S."/>
            <person name="Deng J.M."/>
            <person name="Akiyama K."/>
            <person name="Ansari Y."/>
            <person name="Arakawa T."/>
            <person name="Banh J."/>
            <person name="Banno F."/>
            <person name="Bowser L."/>
            <person name="Brooks S.Y."/>
            <person name="Carninci P."/>
            <person name="Chao Q."/>
            <person name="Choy N."/>
            <person name="Enju A."/>
            <person name="Goldsmith A.D."/>
            <person name="Gurjal M."/>
            <person name="Hansen N.F."/>
            <person name="Hayashizaki Y."/>
            <person name="Johnson-Hopson C."/>
            <person name="Hsuan V.W."/>
            <person name="Iida K."/>
            <person name="Karnes M."/>
            <person name="Khan S."/>
            <person name="Koesema E."/>
            <person name="Ishida J."/>
            <person name="Jiang P.X."/>
            <person name="Jones T."/>
            <person name="Kawai J."/>
            <person name="Kamiya A."/>
            <person name="Meyers C."/>
            <person name="Nakajima M."/>
            <person name="Narusaka M."/>
            <person name="Seki M."/>
            <person name="Sakurai T."/>
            <person name="Satou M."/>
            <person name="Tamse R."/>
            <person name="Vaysberg M."/>
            <person name="Wallender E.K."/>
            <person name="Wong C."/>
            <person name="Yamamura Y."/>
            <person name="Yuan S."/>
            <person name="Shinozaki K."/>
            <person name="Davis R.W."/>
            <person name="Theologis A."/>
            <person name="Ecker J.R."/>
        </authorList>
    </citation>
    <scope>NUCLEOTIDE SEQUENCE [LARGE SCALE MRNA]</scope>
    <source>
        <strain>cv. Columbia</strain>
    </source>
</reference>
<reference key="4">
    <citation type="journal article" date="2011" name="J. Exp. Bot.">
        <title>Exploring the neutral invertase-oxidative stress defence connection in Arabidopsis thaliana.</title>
        <authorList>
            <person name="Xiang L."/>
            <person name="Le Roy K."/>
            <person name="Bolouri-Moghaddam M.R."/>
            <person name="Vanhaecke M."/>
            <person name="Lammens W."/>
            <person name="Rolland F."/>
            <person name="Van den Ende W."/>
        </authorList>
    </citation>
    <scope>GENE FAMILY</scope>
</reference>
<reference key="5">
    <citation type="journal article" date="2008" name="Planta">
        <title>New insights on sucrose metabolism: evidence for an active A/N-Inv in chloroplasts uncovers a novel component of the intracellular carbon trafficking.</title>
        <authorList>
            <person name="Vargas W.A."/>
            <person name="Pontis H.G."/>
            <person name="Salerno G.L."/>
        </authorList>
    </citation>
    <scope>TISSUE SPECIFICITY</scope>
</reference>
<dbReference type="EC" id="3.2.1.26" evidence="2"/>
<dbReference type="EMBL" id="AC012393">
    <property type="protein sequence ID" value="AAF26084.1"/>
    <property type="status" value="ALT_INIT"/>
    <property type="molecule type" value="Genomic_DNA"/>
</dbReference>
<dbReference type="EMBL" id="CP002686">
    <property type="protein sequence ID" value="ANM64512.1"/>
    <property type="molecule type" value="Genomic_DNA"/>
</dbReference>
<dbReference type="EMBL" id="BT004140">
    <property type="protein sequence ID" value="AAO42161.1"/>
    <property type="molecule type" value="mRNA"/>
</dbReference>
<dbReference type="EMBL" id="BT005695">
    <property type="protein sequence ID" value="AAO64115.1"/>
    <property type="molecule type" value="mRNA"/>
</dbReference>
<dbReference type="RefSeq" id="NP_001326532.1">
    <property type="nucleotide sequence ID" value="NM_001337613.1"/>
</dbReference>
<dbReference type="SMR" id="Q84JL5"/>
<dbReference type="FunCoup" id="Q84JL5">
    <property type="interactions" value="7"/>
</dbReference>
<dbReference type="STRING" id="3702.Q84JL5"/>
<dbReference type="CAZy" id="GH100">
    <property type="family name" value="Glycoside Hydrolase Family 100"/>
</dbReference>
<dbReference type="PaxDb" id="3702-AT3G05820.1"/>
<dbReference type="ProteomicsDB" id="248472"/>
<dbReference type="EnsemblPlants" id="AT3G05820.2">
    <property type="protein sequence ID" value="AT3G05820.2"/>
    <property type="gene ID" value="AT3G05820"/>
</dbReference>
<dbReference type="GeneID" id="819751"/>
<dbReference type="Gramene" id="AT3G05820.2">
    <property type="protein sequence ID" value="AT3G05820.2"/>
    <property type="gene ID" value="AT3G05820"/>
</dbReference>
<dbReference type="KEGG" id="ath:AT3G05820"/>
<dbReference type="Araport" id="AT3G05820"/>
<dbReference type="TAIR" id="AT3G05820">
    <property type="gene designation" value="INVH"/>
</dbReference>
<dbReference type="eggNOG" id="ENOG502QT23">
    <property type="taxonomic scope" value="Eukaryota"/>
</dbReference>
<dbReference type="HOGENOM" id="CLU_020846_0_0_1"/>
<dbReference type="InParanoid" id="Q84JL5"/>
<dbReference type="OMA" id="TMRPSKC"/>
<dbReference type="PhylomeDB" id="Q84JL5"/>
<dbReference type="PRO" id="PR:Q84JL5"/>
<dbReference type="Proteomes" id="UP000006548">
    <property type="component" value="Chromosome 3"/>
</dbReference>
<dbReference type="ExpressionAtlas" id="Q84JL5">
    <property type="expression patterns" value="baseline and differential"/>
</dbReference>
<dbReference type="GO" id="GO:0009507">
    <property type="term" value="C:chloroplast"/>
    <property type="evidence" value="ECO:0007669"/>
    <property type="project" value="UniProtKB-SubCell"/>
</dbReference>
<dbReference type="GO" id="GO:0005739">
    <property type="term" value="C:mitochondrion"/>
    <property type="evidence" value="ECO:0000314"/>
    <property type="project" value="TAIR"/>
</dbReference>
<dbReference type="GO" id="GO:0004564">
    <property type="term" value="F:beta-fructofuranosidase activity"/>
    <property type="evidence" value="ECO:0007669"/>
    <property type="project" value="UniProtKB-EC"/>
</dbReference>
<dbReference type="GO" id="GO:0033926">
    <property type="term" value="F:endo-alpha-N-acetylgalactosaminidase activity"/>
    <property type="evidence" value="ECO:0007669"/>
    <property type="project" value="InterPro"/>
</dbReference>
<dbReference type="GO" id="GO:0005975">
    <property type="term" value="P:carbohydrate metabolic process"/>
    <property type="evidence" value="ECO:0007669"/>
    <property type="project" value="InterPro"/>
</dbReference>
<dbReference type="FunFam" id="1.50.10.10:FF:000001">
    <property type="entry name" value="probable alkaline/neutral invertase B"/>
    <property type="match status" value="1"/>
</dbReference>
<dbReference type="Gene3D" id="1.50.10.10">
    <property type="match status" value="1"/>
</dbReference>
<dbReference type="InterPro" id="IPR008928">
    <property type="entry name" value="6-hairpin_glycosidase_sf"/>
</dbReference>
<dbReference type="InterPro" id="IPR012341">
    <property type="entry name" value="6hp_glycosidase-like_sf"/>
</dbReference>
<dbReference type="InterPro" id="IPR024746">
    <property type="entry name" value="Glyco_hydro_100"/>
</dbReference>
<dbReference type="PANTHER" id="PTHR31916">
    <property type="match status" value="1"/>
</dbReference>
<dbReference type="PANTHER" id="PTHR31916:SF44">
    <property type="entry name" value="ALKALINE_NEUTRAL INVERTASE A, CHLOROPLASTIC-RELATED"/>
    <property type="match status" value="1"/>
</dbReference>
<dbReference type="Pfam" id="PF12899">
    <property type="entry name" value="Glyco_hydro_100"/>
    <property type="match status" value="1"/>
</dbReference>
<dbReference type="SUPFAM" id="SSF48208">
    <property type="entry name" value="Six-hairpin glycosidases"/>
    <property type="match status" value="1"/>
</dbReference>
<feature type="transit peptide" description="Chloroplast" evidence="4">
    <location>
        <begin position="1"/>
        <end position="71"/>
    </location>
</feature>
<feature type="chain" id="PRO_0000431503" description="Probable alkaline/neutral invertase A, chloroplastic" evidence="4">
    <location>
        <begin position="72"/>
        <end position="633"/>
    </location>
</feature>
<feature type="modified residue" description="Phosphoserine" evidence="3">
    <location>
        <position position="623"/>
    </location>
</feature>
<protein>
    <recommendedName>
        <fullName evidence="7">Probable alkaline/neutral invertase A, chloroplastic</fullName>
        <shortName evidence="6">A/N-INVA</shortName>
        <ecNumber evidence="2">3.2.1.26</ecNumber>
    </recommendedName>
</protein>
<comment type="function">
    <text evidence="1">Chloroplastic invertase that cleaves sucrose into glucose and fructose and may participate in the carbon flux between the cytosol and plastids in leaves.</text>
</comment>
<comment type="catalytic activity">
    <reaction evidence="2">
        <text>Hydrolysis of terminal non-reducing beta-D-fructofuranoside residues in beta-D-fructofuranosides.</text>
        <dbReference type="EC" id="3.2.1.26"/>
    </reaction>
</comment>
<comment type="subcellular location">
    <subcellularLocation>
        <location evidence="4">Plastid</location>
        <location evidence="4">Chloroplast</location>
    </subcellularLocation>
</comment>
<comment type="tissue specificity">
    <text evidence="5">Expressed in flowers.</text>
</comment>
<comment type="similarity">
    <text evidence="7">Belongs to the glycosyl hydrolase 100 family.</text>
</comment>
<comment type="sequence caution" evidence="7">
    <conflict type="erroneous initiation">
        <sequence resource="EMBL-CDS" id="AAF26084"/>
    </conflict>
    <text>Truncated N-terminus.</text>
</comment>
<organism>
    <name type="scientific">Arabidopsis thaliana</name>
    <name type="common">Mouse-ear cress</name>
    <dbReference type="NCBI Taxonomy" id="3702"/>
    <lineage>
        <taxon>Eukaryota</taxon>
        <taxon>Viridiplantae</taxon>
        <taxon>Streptophyta</taxon>
        <taxon>Embryophyta</taxon>
        <taxon>Tracheophyta</taxon>
        <taxon>Spermatophyta</taxon>
        <taxon>Magnoliopsida</taxon>
        <taxon>eudicotyledons</taxon>
        <taxon>Gunneridae</taxon>
        <taxon>Pentapetalae</taxon>
        <taxon>rosids</taxon>
        <taxon>malvids</taxon>
        <taxon>Brassicales</taxon>
        <taxon>Brassicaceae</taxon>
        <taxon>Camelineae</taxon>
        <taxon>Arabidopsis</taxon>
    </lineage>
</organism>
<proteinExistence type="evidence at transcript level"/>
<keyword id="KW-0119">Carbohydrate metabolism</keyword>
<keyword id="KW-0150">Chloroplast</keyword>
<keyword id="KW-0326">Glycosidase</keyword>
<keyword id="KW-0378">Hydrolase</keyword>
<keyword id="KW-0597">Phosphoprotein</keyword>
<keyword id="KW-0934">Plastid</keyword>
<keyword id="KW-1185">Reference proteome</keyword>
<keyword id="KW-0809">Transit peptide</keyword>
<name>INVH_ARATH</name>
<evidence type="ECO:0000250" key="1">
    <source>
        <dbReference type="UniProtKB" id="Q9FK88"/>
    </source>
</evidence>
<evidence type="ECO:0000250" key="2">
    <source>
        <dbReference type="UniProtKB" id="Q9FXA8"/>
    </source>
</evidence>
<evidence type="ECO:0000250" key="3">
    <source>
        <dbReference type="UniProtKB" id="Q9LQF2"/>
    </source>
</evidence>
<evidence type="ECO:0000255" key="4"/>
<evidence type="ECO:0000269" key="5">
    <source>
    </source>
</evidence>
<evidence type="ECO:0000303" key="6">
    <source>
    </source>
</evidence>
<evidence type="ECO:0000305" key="7"/>
<evidence type="ECO:0000312" key="8">
    <source>
        <dbReference type="Araport" id="AT3G05820"/>
    </source>
</evidence>
<evidence type="ECO:0000312" key="9">
    <source>
        <dbReference type="EMBL" id="AAF26084.1"/>
    </source>
</evidence>